<organism>
    <name type="scientific">Tropheryma whipplei (strain Twist)</name>
    <name type="common">Whipple's bacillus</name>
    <dbReference type="NCBI Taxonomy" id="203267"/>
    <lineage>
        <taxon>Bacteria</taxon>
        <taxon>Bacillati</taxon>
        <taxon>Actinomycetota</taxon>
        <taxon>Actinomycetes</taxon>
        <taxon>Micrococcales</taxon>
        <taxon>Tropherymataceae</taxon>
        <taxon>Tropheryma</taxon>
    </lineage>
</organism>
<dbReference type="EMBL" id="AE014184">
    <property type="protein sequence ID" value="AAO44708.1"/>
    <property type="status" value="ALT_INIT"/>
    <property type="molecule type" value="Genomic_DNA"/>
</dbReference>
<dbReference type="RefSeq" id="WP_011096570.1">
    <property type="nucleotide sequence ID" value="NC_004572.3"/>
</dbReference>
<dbReference type="SMR" id="P65981"/>
<dbReference type="STRING" id="203267.TWT_611"/>
<dbReference type="GeneID" id="67388408"/>
<dbReference type="KEGG" id="twh:TWT_611"/>
<dbReference type="eggNOG" id="COG0468">
    <property type="taxonomic scope" value="Bacteria"/>
</dbReference>
<dbReference type="HOGENOM" id="CLU_040469_3_0_11"/>
<dbReference type="OrthoDB" id="9776733at2"/>
<dbReference type="Proteomes" id="UP000002200">
    <property type="component" value="Chromosome"/>
</dbReference>
<dbReference type="GO" id="GO:0005829">
    <property type="term" value="C:cytosol"/>
    <property type="evidence" value="ECO:0007669"/>
    <property type="project" value="TreeGrafter"/>
</dbReference>
<dbReference type="GO" id="GO:0005524">
    <property type="term" value="F:ATP binding"/>
    <property type="evidence" value="ECO:0007669"/>
    <property type="project" value="UniProtKB-UniRule"/>
</dbReference>
<dbReference type="GO" id="GO:0016887">
    <property type="term" value="F:ATP hydrolysis activity"/>
    <property type="evidence" value="ECO:0007669"/>
    <property type="project" value="InterPro"/>
</dbReference>
<dbReference type="GO" id="GO:0140664">
    <property type="term" value="F:ATP-dependent DNA damage sensor activity"/>
    <property type="evidence" value="ECO:0007669"/>
    <property type="project" value="InterPro"/>
</dbReference>
<dbReference type="GO" id="GO:0003684">
    <property type="term" value="F:damaged DNA binding"/>
    <property type="evidence" value="ECO:0007669"/>
    <property type="project" value="UniProtKB-UniRule"/>
</dbReference>
<dbReference type="GO" id="GO:0003697">
    <property type="term" value="F:single-stranded DNA binding"/>
    <property type="evidence" value="ECO:0007669"/>
    <property type="project" value="UniProtKB-UniRule"/>
</dbReference>
<dbReference type="GO" id="GO:0006310">
    <property type="term" value="P:DNA recombination"/>
    <property type="evidence" value="ECO:0007669"/>
    <property type="project" value="UniProtKB-UniRule"/>
</dbReference>
<dbReference type="GO" id="GO:0006281">
    <property type="term" value="P:DNA repair"/>
    <property type="evidence" value="ECO:0007669"/>
    <property type="project" value="UniProtKB-UniRule"/>
</dbReference>
<dbReference type="GO" id="GO:0009432">
    <property type="term" value="P:SOS response"/>
    <property type="evidence" value="ECO:0007669"/>
    <property type="project" value="UniProtKB-UniRule"/>
</dbReference>
<dbReference type="CDD" id="cd00983">
    <property type="entry name" value="RecA"/>
    <property type="match status" value="1"/>
</dbReference>
<dbReference type="FunFam" id="3.40.50.300:FF:000087">
    <property type="entry name" value="Recombinase RecA"/>
    <property type="match status" value="1"/>
</dbReference>
<dbReference type="Gene3D" id="3.40.50.300">
    <property type="entry name" value="P-loop containing nucleotide triphosphate hydrolases"/>
    <property type="match status" value="1"/>
</dbReference>
<dbReference type="HAMAP" id="MF_00268">
    <property type="entry name" value="RecA"/>
    <property type="match status" value="1"/>
</dbReference>
<dbReference type="InterPro" id="IPR003593">
    <property type="entry name" value="AAA+_ATPase"/>
</dbReference>
<dbReference type="InterPro" id="IPR013765">
    <property type="entry name" value="DNA_recomb/repair_RecA"/>
</dbReference>
<dbReference type="InterPro" id="IPR020584">
    <property type="entry name" value="DNA_recomb/repair_RecA_CS"/>
</dbReference>
<dbReference type="InterPro" id="IPR027417">
    <property type="entry name" value="P-loop_NTPase"/>
</dbReference>
<dbReference type="InterPro" id="IPR049261">
    <property type="entry name" value="RecA-like_C"/>
</dbReference>
<dbReference type="InterPro" id="IPR049428">
    <property type="entry name" value="RecA-like_N"/>
</dbReference>
<dbReference type="InterPro" id="IPR020588">
    <property type="entry name" value="RecA_ATP-bd"/>
</dbReference>
<dbReference type="InterPro" id="IPR023400">
    <property type="entry name" value="RecA_C_sf"/>
</dbReference>
<dbReference type="InterPro" id="IPR020587">
    <property type="entry name" value="RecA_monomer-monomer_interface"/>
</dbReference>
<dbReference type="NCBIfam" id="TIGR02012">
    <property type="entry name" value="tigrfam_recA"/>
    <property type="match status" value="1"/>
</dbReference>
<dbReference type="PANTHER" id="PTHR45900:SF1">
    <property type="entry name" value="MITOCHONDRIAL DNA REPAIR PROTEIN RECA HOMOLOG-RELATED"/>
    <property type="match status" value="1"/>
</dbReference>
<dbReference type="PANTHER" id="PTHR45900">
    <property type="entry name" value="RECA"/>
    <property type="match status" value="1"/>
</dbReference>
<dbReference type="Pfam" id="PF00154">
    <property type="entry name" value="RecA"/>
    <property type="match status" value="1"/>
</dbReference>
<dbReference type="Pfam" id="PF21096">
    <property type="entry name" value="RecA_C"/>
    <property type="match status" value="1"/>
</dbReference>
<dbReference type="PRINTS" id="PR00142">
    <property type="entry name" value="RECA"/>
</dbReference>
<dbReference type="SMART" id="SM00382">
    <property type="entry name" value="AAA"/>
    <property type="match status" value="1"/>
</dbReference>
<dbReference type="SUPFAM" id="SSF52540">
    <property type="entry name" value="P-loop containing nucleoside triphosphate hydrolases"/>
    <property type="match status" value="1"/>
</dbReference>
<dbReference type="SUPFAM" id="SSF54752">
    <property type="entry name" value="RecA protein, C-terminal domain"/>
    <property type="match status" value="1"/>
</dbReference>
<dbReference type="PROSITE" id="PS00321">
    <property type="entry name" value="RECA_1"/>
    <property type="match status" value="1"/>
</dbReference>
<dbReference type="PROSITE" id="PS50162">
    <property type="entry name" value="RECA_2"/>
    <property type="match status" value="1"/>
</dbReference>
<dbReference type="PROSITE" id="PS50163">
    <property type="entry name" value="RECA_3"/>
    <property type="match status" value="1"/>
</dbReference>
<protein>
    <recommendedName>
        <fullName evidence="1">Protein RecA</fullName>
    </recommendedName>
    <alternativeName>
        <fullName evidence="1">Recombinase A</fullName>
    </alternativeName>
</protein>
<reference key="1">
    <citation type="journal article" date="2003" name="Genome Res.">
        <title>Tropheryma whipplei twist: a human pathogenic Actinobacteria with a reduced genome.</title>
        <authorList>
            <person name="Raoult D."/>
            <person name="Ogata H."/>
            <person name="Audic S."/>
            <person name="Robert C."/>
            <person name="Suhre K."/>
            <person name="Drancourt M."/>
            <person name="Claverie J.-M."/>
        </authorList>
    </citation>
    <scope>NUCLEOTIDE SEQUENCE [LARGE SCALE GENOMIC DNA]</scope>
    <source>
        <strain>Twist</strain>
    </source>
</reference>
<evidence type="ECO:0000255" key="1">
    <source>
        <dbReference type="HAMAP-Rule" id="MF_00268"/>
    </source>
</evidence>
<evidence type="ECO:0000256" key="2">
    <source>
        <dbReference type="SAM" id="MobiDB-lite"/>
    </source>
</evidence>
<evidence type="ECO:0000305" key="3"/>
<sequence length="437" mass="46450">MSSNDQINRTRALELALANIDRQYGKGAVMRMNDAQKAYIDVIPTGSIALDYALGVGGLPRGRIVEIYGPESSGKTTLTLHAIASVQRAGGIAAFIDAEHALDPEYAKKLGVDIDALLVSQPDSGEQALEISDMLIRSTAIDLIVIDSVAALVPRAELEGDMGDMHVGLQARLMSQALRKITSGLNQTGTTAIFINQLREKVGVFFGSPETTPGGRALKFYASVRLDIRRVETIKQGTEAVGNRTRVKVVKNKVAPPFKQAEFDVLYGVGISRESGLIDFAVDRGIIKKSGSWYVYGDDQLGQGKENARRFLLENKSVADEIENKIISLLGFRSNEFGDLPDHDAAVRTSPDTNSRKVSGTGAVHTTSGSPSAGKGTASGAVNNSRDSTGGDTPAGQGPLNLSVNRDVSTDTVSSKISDATHNQKPAGNGKSVKRKG</sequence>
<feature type="chain" id="PRO_0000122887" description="Protein RecA">
    <location>
        <begin position="1"/>
        <end position="437"/>
    </location>
</feature>
<feature type="region of interest" description="Disordered" evidence="2">
    <location>
        <begin position="343"/>
        <end position="437"/>
    </location>
</feature>
<feature type="compositionally biased region" description="Polar residues" evidence="2">
    <location>
        <begin position="350"/>
        <end position="371"/>
    </location>
</feature>
<feature type="compositionally biased region" description="Polar residues" evidence="2">
    <location>
        <begin position="380"/>
        <end position="391"/>
    </location>
</feature>
<feature type="compositionally biased region" description="Polar residues" evidence="2">
    <location>
        <begin position="400"/>
        <end position="426"/>
    </location>
</feature>
<feature type="binding site" evidence="1">
    <location>
        <begin position="69"/>
        <end position="76"/>
    </location>
    <ligand>
        <name>ATP</name>
        <dbReference type="ChEBI" id="CHEBI:30616"/>
    </ligand>
</feature>
<gene>
    <name evidence="1" type="primary">recA</name>
    <name type="ordered locus">TWT_611</name>
</gene>
<name>RECA_TROWT</name>
<comment type="function">
    <text evidence="1">Can catalyze the hydrolysis of ATP in the presence of single-stranded DNA, the ATP-dependent uptake of single-stranded DNA by duplex DNA, and the ATP-dependent hybridization of homologous single-stranded DNAs. It interacts with LexA causing its activation and leading to its autocatalytic cleavage.</text>
</comment>
<comment type="subcellular location">
    <subcellularLocation>
        <location evidence="1">Cytoplasm</location>
    </subcellularLocation>
</comment>
<comment type="similarity">
    <text evidence="1">Belongs to the RecA family.</text>
</comment>
<comment type="sequence caution" evidence="3">
    <conflict type="erroneous initiation">
        <sequence resource="EMBL-CDS" id="AAO44708"/>
    </conflict>
</comment>
<proteinExistence type="inferred from homology"/>
<accession>P65981</accession>
<accession>Q83MS9</accession>
<accession>Q83NC6</accession>
<keyword id="KW-0067">ATP-binding</keyword>
<keyword id="KW-0963">Cytoplasm</keyword>
<keyword id="KW-0227">DNA damage</keyword>
<keyword id="KW-0233">DNA recombination</keyword>
<keyword id="KW-0234">DNA repair</keyword>
<keyword id="KW-0238">DNA-binding</keyword>
<keyword id="KW-0547">Nucleotide-binding</keyword>
<keyword id="KW-1185">Reference proteome</keyword>
<keyword id="KW-0742">SOS response</keyword>